<dbReference type="EC" id="2.7.7.61"/>
<dbReference type="EMBL" id="AE004092">
    <property type="protein sequence ID" value="AAK34054.1"/>
    <property type="molecule type" value="Genomic_DNA"/>
</dbReference>
<dbReference type="EMBL" id="CP000017">
    <property type="protein sequence ID" value="AAZ51526.1"/>
    <property type="status" value="ALT_INIT"/>
    <property type="molecule type" value="Genomic_DNA"/>
</dbReference>
<dbReference type="RefSeq" id="NP_269333.1">
    <property type="nucleotide sequence ID" value="NC_002737.2"/>
</dbReference>
<dbReference type="SMR" id="P58160"/>
<dbReference type="KEGG" id="spy:SPy_1190"/>
<dbReference type="KEGG" id="spz:M5005_Spy0908"/>
<dbReference type="PATRIC" id="fig|160490.10.peg.1040"/>
<dbReference type="HOGENOM" id="CLU_104529_1_0_9"/>
<dbReference type="OMA" id="GYEYYLV"/>
<dbReference type="Proteomes" id="UP000000750">
    <property type="component" value="Chromosome"/>
</dbReference>
<dbReference type="GO" id="GO:0050519">
    <property type="term" value="F:holo-citrate lyase synthase activity"/>
    <property type="evidence" value="ECO:0007669"/>
    <property type="project" value="UniProtKB-UniRule"/>
</dbReference>
<dbReference type="GO" id="GO:0051191">
    <property type="term" value="P:prosthetic group biosynthetic process"/>
    <property type="evidence" value="ECO:0007669"/>
    <property type="project" value="InterPro"/>
</dbReference>
<dbReference type="HAMAP" id="MF_00398">
    <property type="entry name" value="CitX"/>
    <property type="match status" value="1"/>
</dbReference>
<dbReference type="InterPro" id="IPR005551">
    <property type="entry name" value="CitX"/>
</dbReference>
<dbReference type="NCBIfam" id="TIGR03124">
    <property type="entry name" value="citrate_citX"/>
    <property type="match status" value="1"/>
</dbReference>
<dbReference type="NCBIfam" id="NF002383">
    <property type="entry name" value="PRK01392.1"/>
    <property type="match status" value="1"/>
</dbReference>
<dbReference type="Pfam" id="PF03802">
    <property type="entry name" value="CitX"/>
    <property type="match status" value="1"/>
</dbReference>
<sequence>MCKDTYFSGEAIQLSDMLRAREERALRQLHLLKEYPEGSLLSVTMNIPGPIKTSPKLLEAFDIVIKAIQTALADDKICYQLRLLPTTGYEYYLITSLPSRDLKLKMIALETELPIGRLMDLDVLVLQNDLPHSISRTVLGGSPRQCFICSKEAKVCGRLRKHSVEEMQTAISKLLHSFFNKDNQSSSSDKTG</sequence>
<name>CITX_STRP1</name>
<evidence type="ECO:0000250" key="1"/>
<evidence type="ECO:0000305" key="2"/>
<protein>
    <recommendedName>
        <fullName>Probable apo-citrate lyase phosphoribosyl-dephospho-CoA transferase</fullName>
        <ecNumber>2.7.7.61</ecNumber>
    </recommendedName>
    <alternativeName>
        <fullName>Apo-ACP nucleodityltransferase</fullName>
    </alternativeName>
    <alternativeName>
        <fullName>Holo-ACP synthase</fullName>
    </alternativeName>
    <alternativeName>
        <fullName>Holo-citrate lyase synthase</fullName>
    </alternativeName>
</protein>
<proteinExistence type="inferred from homology"/>
<accession>P58160</accession>
<accession>Q48YP6</accession>
<organism>
    <name type="scientific">Streptococcus pyogenes serotype M1</name>
    <dbReference type="NCBI Taxonomy" id="301447"/>
    <lineage>
        <taxon>Bacteria</taxon>
        <taxon>Bacillati</taxon>
        <taxon>Bacillota</taxon>
        <taxon>Bacilli</taxon>
        <taxon>Lactobacillales</taxon>
        <taxon>Streptococcaceae</taxon>
        <taxon>Streptococcus</taxon>
    </lineage>
</organism>
<comment type="function">
    <text evidence="1">Transfers 2-(5''-triphosphoribosyl)-3'-dephosphocoenzyme-A on a serine residue to the apo-acyl carrier protein (gamma chain) of the citrate lyase to yield holo-acyl carrier protein.</text>
</comment>
<comment type="catalytic activity">
    <reaction>
        <text>apo-[citrate lyase ACP] + 2'-(5''-triphospho-alpha-D-ribosyl)-3'-dephospho-CoA = holo-[citrate lyase ACP] + diphosphate</text>
        <dbReference type="Rhea" id="RHEA:16333"/>
        <dbReference type="Rhea" id="RHEA-COMP:10157"/>
        <dbReference type="Rhea" id="RHEA-COMP:10158"/>
        <dbReference type="ChEBI" id="CHEBI:29999"/>
        <dbReference type="ChEBI" id="CHEBI:33019"/>
        <dbReference type="ChEBI" id="CHEBI:61378"/>
        <dbReference type="ChEBI" id="CHEBI:82683"/>
        <dbReference type="EC" id="2.7.7.61"/>
    </reaction>
</comment>
<comment type="similarity">
    <text evidence="2">Belongs to the CitX family.</text>
</comment>
<comment type="sequence caution" evidence="2">
    <conflict type="erroneous initiation">
        <sequence resource="EMBL-CDS" id="AAZ51526"/>
    </conflict>
</comment>
<reference key="1">
    <citation type="journal article" date="2001" name="Proc. Natl. Acad. Sci. U.S.A.">
        <title>Complete genome sequence of an M1 strain of Streptococcus pyogenes.</title>
        <authorList>
            <person name="Ferretti J.J."/>
            <person name="McShan W.M."/>
            <person name="Ajdic D.J."/>
            <person name="Savic D.J."/>
            <person name="Savic G."/>
            <person name="Lyon K."/>
            <person name="Primeaux C."/>
            <person name="Sezate S."/>
            <person name="Suvorov A.N."/>
            <person name="Kenton S."/>
            <person name="Lai H.S."/>
            <person name="Lin S.P."/>
            <person name="Qian Y."/>
            <person name="Jia H.G."/>
            <person name="Najar F.Z."/>
            <person name="Ren Q."/>
            <person name="Zhu H."/>
            <person name="Song L."/>
            <person name="White J."/>
            <person name="Yuan X."/>
            <person name="Clifton S.W."/>
            <person name="Roe B.A."/>
            <person name="McLaughlin R.E."/>
        </authorList>
    </citation>
    <scope>NUCLEOTIDE SEQUENCE [LARGE SCALE GENOMIC DNA]</scope>
    <source>
        <strain>ATCC 700294 / SF370 / Serotype M1</strain>
    </source>
</reference>
<reference key="2">
    <citation type="journal article" date="2005" name="J. Infect. Dis.">
        <title>Evolutionary origin and emergence of a highly successful clone of serotype M1 group A Streptococcus involved multiple horizontal gene transfer events.</title>
        <authorList>
            <person name="Sumby P."/>
            <person name="Porcella S.F."/>
            <person name="Madrigal A.G."/>
            <person name="Barbian K.D."/>
            <person name="Virtaneva K."/>
            <person name="Ricklefs S.M."/>
            <person name="Sturdevant D.E."/>
            <person name="Graham M.R."/>
            <person name="Vuopio-Varkila J."/>
            <person name="Hoe N.P."/>
            <person name="Musser J.M."/>
        </authorList>
    </citation>
    <scope>NUCLEOTIDE SEQUENCE [LARGE SCALE GENOMIC DNA]</scope>
    <source>
        <strain>ATCC BAA-947 / MGAS5005 / Serotype M1</strain>
    </source>
</reference>
<feature type="chain" id="PRO_0000214688" description="Probable apo-citrate lyase phosphoribosyl-dephospho-CoA transferase">
    <location>
        <begin position="1"/>
        <end position="192"/>
    </location>
</feature>
<gene>
    <name type="primary">citX</name>
    <name type="ordered locus">SPy_1190</name>
    <name type="ordered locus">M5005_Spy0908</name>
</gene>
<keyword id="KW-0548">Nucleotidyltransferase</keyword>
<keyword id="KW-1185">Reference proteome</keyword>
<keyword id="KW-0808">Transferase</keyword>